<accession>Q54BA6</accession>
<protein>
    <recommendedName>
        <fullName>Putative uncharacterized protein DDB_G0293796</fullName>
    </recommendedName>
</protein>
<dbReference type="EMBL" id="AAFI02000220">
    <property type="protein sequence ID" value="EAL60531.1"/>
    <property type="molecule type" value="Genomic_DNA"/>
</dbReference>
<dbReference type="RefSeq" id="XP_628944.1">
    <property type="nucleotide sequence ID" value="XM_628942.1"/>
</dbReference>
<dbReference type="PaxDb" id="44689-DDB0192122"/>
<dbReference type="EnsemblProtists" id="EAL60531">
    <property type="protein sequence ID" value="EAL60531"/>
    <property type="gene ID" value="DDB_G0293796"/>
</dbReference>
<dbReference type="GeneID" id="8629420"/>
<dbReference type="KEGG" id="ddi:DDB_G0293796"/>
<dbReference type="dictyBase" id="DDB_G0293796"/>
<dbReference type="HOGENOM" id="CLU_3176515_0_0_1"/>
<dbReference type="InParanoid" id="Q54BA6"/>
<dbReference type="PRO" id="PR:Q54BA6"/>
<dbReference type="Proteomes" id="UP000002195">
    <property type="component" value="Chromosome 6"/>
</dbReference>
<sequence length="47" mass="5840">MSTDNFEKIKGRPTQKEEWQLKEWEKEKDENNRLFQEQKQKTTNRKG</sequence>
<evidence type="ECO:0000256" key="1">
    <source>
        <dbReference type="SAM" id="MobiDB-lite"/>
    </source>
</evidence>
<feature type="chain" id="PRO_0000343936" description="Putative uncharacterized protein DDB_G0293796">
    <location>
        <begin position="1"/>
        <end position="47"/>
    </location>
</feature>
<feature type="region of interest" description="Disordered" evidence="1">
    <location>
        <begin position="1"/>
        <end position="20"/>
    </location>
</feature>
<feature type="region of interest" description="Disordered" evidence="1">
    <location>
        <begin position="25"/>
        <end position="47"/>
    </location>
</feature>
<feature type="compositionally biased region" description="Basic and acidic residues" evidence="1">
    <location>
        <begin position="25"/>
        <end position="40"/>
    </location>
</feature>
<keyword id="KW-1185">Reference proteome</keyword>
<gene>
    <name type="ORF">DDB_G0293796</name>
</gene>
<proteinExistence type="predicted"/>
<organism>
    <name type="scientific">Dictyostelium discoideum</name>
    <name type="common">Social amoeba</name>
    <dbReference type="NCBI Taxonomy" id="44689"/>
    <lineage>
        <taxon>Eukaryota</taxon>
        <taxon>Amoebozoa</taxon>
        <taxon>Evosea</taxon>
        <taxon>Eumycetozoa</taxon>
        <taxon>Dictyostelia</taxon>
        <taxon>Dictyosteliales</taxon>
        <taxon>Dictyosteliaceae</taxon>
        <taxon>Dictyostelium</taxon>
    </lineage>
</organism>
<name>Y2122_DICDI</name>
<reference key="1">
    <citation type="journal article" date="2005" name="Nature">
        <title>The genome of the social amoeba Dictyostelium discoideum.</title>
        <authorList>
            <person name="Eichinger L."/>
            <person name="Pachebat J.A."/>
            <person name="Gloeckner G."/>
            <person name="Rajandream M.A."/>
            <person name="Sucgang R."/>
            <person name="Berriman M."/>
            <person name="Song J."/>
            <person name="Olsen R."/>
            <person name="Szafranski K."/>
            <person name="Xu Q."/>
            <person name="Tunggal B."/>
            <person name="Kummerfeld S."/>
            <person name="Madera M."/>
            <person name="Konfortov B.A."/>
            <person name="Rivero F."/>
            <person name="Bankier A.T."/>
            <person name="Lehmann R."/>
            <person name="Hamlin N."/>
            <person name="Davies R."/>
            <person name="Gaudet P."/>
            <person name="Fey P."/>
            <person name="Pilcher K."/>
            <person name="Chen G."/>
            <person name="Saunders D."/>
            <person name="Sodergren E.J."/>
            <person name="Davis P."/>
            <person name="Kerhornou A."/>
            <person name="Nie X."/>
            <person name="Hall N."/>
            <person name="Anjard C."/>
            <person name="Hemphill L."/>
            <person name="Bason N."/>
            <person name="Farbrother P."/>
            <person name="Desany B."/>
            <person name="Just E."/>
            <person name="Morio T."/>
            <person name="Rost R."/>
            <person name="Churcher C.M."/>
            <person name="Cooper J."/>
            <person name="Haydock S."/>
            <person name="van Driessche N."/>
            <person name="Cronin A."/>
            <person name="Goodhead I."/>
            <person name="Muzny D.M."/>
            <person name="Mourier T."/>
            <person name="Pain A."/>
            <person name="Lu M."/>
            <person name="Harper D."/>
            <person name="Lindsay R."/>
            <person name="Hauser H."/>
            <person name="James K.D."/>
            <person name="Quiles M."/>
            <person name="Madan Babu M."/>
            <person name="Saito T."/>
            <person name="Buchrieser C."/>
            <person name="Wardroper A."/>
            <person name="Felder M."/>
            <person name="Thangavelu M."/>
            <person name="Johnson D."/>
            <person name="Knights A."/>
            <person name="Loulseged H."/>
            <person name="Mungall K.L."/>
            <person name="Oliver K."/>
            <person name="Price C."/>
            <person name="Quail M.A."/>
            <person name="Urushihara H."/>
            <person name="Hernandez J."/>
            <person name="Rabbinowitsch E."/>
            <person name="Steffen D."/>
            <person name="Sanders M."/>
            <person name="Ma J."/>
            <person name="Kohara Y."/>
            <person name="Sharp S."/>
            <person name="Simmonds M.N."/>
            <person name="Spiegler S."/>
            <person name="Tivey A."/>
            <person name="Sugano S."/>
            <person name="White B."/>
            <person name="Walker D."/>
            <person name="Woodward J.R."/>
            <person name="Winckler T."/>
            <person name="Tanaka Y."/>
            <person name="Shaulsky G."/>
            <person name="Schleicher M."/>
            <person name="Weinstock G.M."/>
            <person name="Rosenthal A."/>
            <person name="Cox E.C."/>
            <person name="Chisholm R.L."/>
            <person name="Gibbs R.A."/>
            <person name="Loomis W.F."/>
            <person name="Platzer M."/>
            <person name="Kay R.R."/>
            <person name="Williams J.G."/>
            <person name="Dear P.H."/>
            <person name="Noegel A.A."/>
            <person name="Barrell B.G."/>
            <person name="Kuspa A."/>
        </authorList>
    </citation>
    <scope>NUCLEOTIDE SEQUENCE [LARGE SCALE GENOMIC DNA]</scope>
    <source>
        <strain>AX4</strain>
    </source>
</reference>